<sequence>MTTRIDTRFADLKQQGRPALVTFVMAGDPDLDTSLQILKALPAAGADVIEIGMPFTDPMADGPAIQAAGLRALKAGTTLKKTLGLVRDFRATDNATPLVLMGYYNPIYIYGVDAFLADAKAAGVDGLIIVDLPPEEDEELCLPAMKAGLNFIRLATPTTDEKRLPAVLANTSGFVYYVSITGITGSASADASAVGAAVQRIKRHTNLPVCVGFGIRTPDAAQAIAAQANGAVVGSALIDALKASLDAEGRATKGTVGAVADLVASLAAGVRGAKQAAE</sequence>
<evidence type="ECO:0000255" key="1">
    <source>
        <dbReference type="HAMAP-Rule" id="MF_00131"/>
    </source>
</evidence>
<gene>
    <name evidence="1" type="primary">trpA</name>
    <name type="ordered locus">Rpal_0073</name>
</gene>
<name>TRPA_RHOPT</name>
<protein>
    <recommendedName>
        <fullName evidence="1">Tryptophan synthase alpha chain</fullName>
        <ecNumber evidence="1">4.2.1.20</ecNumber>
    </recommendedName>
</protein>
<keyword id="KW-0028">Amino-acid biosynthesis</keyword>
<keyword id="KW-0057">Aromatic amino acid biosynthesis</keyword>
<keyword id="KW-0456">Lyase</keyword>
<keyword id="KW-0822">Tryptophan biosynthesis</keyword>
<accession>B3Q606</accession>
<feature type="chain" id="PRO_1000095745" description="Tryptophan synthase alpha chain">
    <location>
        <begin position="1"/>
        <end position="278"/>
    </location>
</feature>
<feature type="active site" description="Proton acceptor" evidence="1">
    <location>
        <position position="50"/>
    </location>
</feature>
<feature type="active site" description="Proton acceptor" evidence="1">
    <location>
        <position position="61"/>
    </location>
</feature>
<comment type="function">
    <text evidence="1">The alpha subunit is responsible for the aldol cleavage of indoleglycerol phosphate to indole and glyceraldehyde 3-phosphate.</text>
</comment>
<comment type="catalytic activity">
    <reaction evidence="1">
        <text>(1S,2R)-1-C-(indol-3-yl)glycerol 3-phosphate + L-serine = D-glyceraldehyde 3-phosphate + L-tryptophan + H2O</text>
        <dbReference type="Rhea" id="RHEA:10532"/>
        <dbReference type="ChEBI" id="CHEBI:15377"/>
        <dbReference type="ChEBI" id="CHEBI:33384"/>
        <dbReference type="ChEBI" id="CHEBI:57912"/>
        <dbReference type="ChEBI" id="CHEBI:58866"/>
        <dbReference type="ChEBI" id="CHEBI:59776"/>
        <dbReference type="EC" id="4.2.1.20"/>
    </reaction>
</comment>
<comment type="pathway">
    <text evidence="1">Amino-acid biosynthesis; L-tryptophan biosynthesis; L-tryptophan from chorismate: step 5/5.</text>
</comment>
<comment type="subunit">
    <text evidence="1">Tetramer of two alpha and two beta chains.</text>
</comment>
<comment type="similarity">
    <text evidence="1">Belongs to the TrpA family.</text>
</comment>
<reference key="1">
    <citation type="submission" date="2008-05" db="EMBL/GenBank/DDBJ databases">
        <title>Complete sequence of Rhodopseudomonas palustris TIE-1.</title>
        <authorList>
            <consortium name="US DOE Joint Genome Institute"/>
            <person name="Lucas S."/>
            <person name="Copeland A."/>
            <person name="Lapidus A."/>
            <person name="Glavina del Rio T."/>
            <person name="Dalin E."/>
            <person name="Tice H."/>
            <person name="Pitluck S."/>
            <person name="Chain P."/>
            <person name="Malfatti S."/>
            <person name="Shin M."/>
            <person name="Vergez L."/>
            <person name="Lang D."/>
            <person name="Schmutz J."/>
            <person name="Larimer F."/>
            <person name="Land M."/>
            <person name="Hauser L."/>
            <person name="Kyrpides N."/>
            <person name="Mikhailova N."/>
            <person name="Emerson D."/>
            <person name="Newman D.K."/>
            <person name="Roden E."/>
            <person name="Richardson P."/>
        </authorList>
    </citation>
    <scope>NUCLEOTIDE SEQUENCE [LARGE SCALE GENOMIC DNA]</scope>
    <source>
        <strain>TIE-1</strain>
    </source>
</reference>
<organism>
    <name type="scientific">Rhodopseudomonas palustris (strain TIE-1)</name>
    <dbReference type="NCBI Taxonomy" id="395960"/>
    <lineage>
        <taxon>Bacteria</taxon>
        <taxon>Pseudomonadati</taxon>
        <taxon>Pseudomonadota</taxon>
        <taxon>Alphaproteobacteria</taxon>
        <taxon>Hyphomicrobiales</taxon>
        <taxon>Nitrobacteraceae</taxon>
        <taxon>Rhodopseudomonas</taxon>
    </lineage>
</organism>
<proteinExistence type="inferred from homology"/>
<dbReference type="EC" id="4.2.1.20" evidence="1"/>
<dbReference type="EMBL" id="CP001096">
    <property type="protein sequence ID" value="ACE98635.1"/>
    <property type="molecule type" value="Genomic_DNA"/>
</dbReference>
<dbReference type="RefSeq" id="WP_012493900.1">
    <property type="nucleotide sequence ID" value="NC_011004.1"/>
</dbReference>
<dbReference type="SMR" id="B3Q606"/>
<dbReference type="KEGG" id="rpt:Rpal_0073"/>
<dbReference type="HOGENOM" id="CLU_016734_0_0_5"/>
<dbReference type="OrthoDB" id="9804578at2"/>
<dbReference type="UniPathway" id="UPA00035">
    <property type="reaction ID" value="UER00044"/>
</dbReference>
<dbReference type="Proteomes" id="UP000001725">
    <property type="component" value="Chromosome"/>
</dbReference>
<dbReference type="GO" id="GO:0005829">
    <property type="term" value="C:cytosol"/>
    <property type="evidence" value="ECO:0007669"/>
    <property type="project" value="TreeGrafter"/>
</dbReference>
<dbReference type="GO" id="GO:0004834">
    <property type="term" value="F:tryptophan synthase activity"/>
    <property type="evidence" value="ECO:0007669"/>
    <property type="project" value="UniProtKB-UniRule"/>
</dbReference>
<dbReference type="CDD" id="cd04724">
    <property type="entry name" value="Tryptophan_synthase_alpha"/>
    <property type="match status" value="1"/>
</dbReference>
<dbReference type="FunFam" id="3.20.20.70:FF:000037">
    <property type="entry name" value="Tryptophan synthase alpha chain"/>
    <property type="match status" value="1"/>
</dbReference>
<dbReference type="Gene3D" id="3.20.20.70">
    <property type="entry name" value="Aldolase class I"/>
    <property type="match status" value="1"/>
</dbReference>
<dbReference type="HAMAP" id="MF_00131">
    <property type="entry name" value="Trp_synth_alpha"/>
    <property type="match status" value="1"/>
</dbReference>
<dbReference type="InterPro" id="IPR013785">
    <property type="entry name" value="Aldolase_TIM"/>
</dbReference>
<dbReference type="InterPro" id="IPR011060">
    <property type="entry name" value="RibuloseP-bd_barrel"/>
</dbReference>
<dbReference type="InterPro" id="IPR018204">
    <property type="entry name" value="Trp_synthase_alpha_AS"/>
</dbReference>
<dbReference type="InterPro" id="IPR002028">
    <property type="entry name" value="Trp_synthase_suA"/>
</dbReference>
<dbReference type="NCBIfam" id="TIGR00262">
    <property type="entry name" value="trpA"/>
    <property type="match status" value="1"/>
</dbReference>
<dbReference type="PANTHER" id="PTHR43406:SF1">
    <property type="entry name" value="TRYPTOPHAN SYNTHASE ALPHA CHAIN, CHLOROPLASTIC"/>
    <property type="match status" value="1"/>
</dbReference>
<dbReference type="PANTHER" id="PTHR43406">
    <property type="entry name" value="TRYPTOPHAN SYNTHASE, ALPHA CHAIN"/>
    <property type="match status" value="1"/>
</dbReference>
<dbReference type="Pfam" id="PF00290">
    <property type="entry name" value="Trp_syntA"/>
    <property type="match status" value="1"/>
</dbReference>
<dbReference type="SUPFAM" id="SSF51366">
    <property type="entry name" value="Ribulose-phoshate binding barrel"/>
    <property type="match status" value="1"/>
</dbReference>
<dbReference type="PROSITE" id="PS00167">
    <property type="entry name" value="TRP_SYNTHASE_ALPHA"/>
    <property type="match status" value="1"/>
</dbReference>